<proteinExistence type="evidence at protein level"/>
<sequence length="110" mass="12300">MASRRSRPQAASFRNGRRRQPTSYNDLLRMFGQMRVRKPPAQPTQAIIAEPGDLRHDLNQQERATLSSNVQRFFMIGHGSLTADAGGLTYTVSWVPTKQIQRKVAPPAGP</sequence>
<organism>
    <name type="scientific">Equine arteritis virus (strain Bucyrus)</name>
    <name type="common">EAV</name>
    <dbReference type="NCBI Taxonomy" id="299386"/>
    <lineage>
        <taxon>Viruses</taxon>
        <taxon>Riboviria</taxon>
        <taxon>Orthornavirae</taxon>
        <taxon>Pisuviricota</taxon>
        <taxon>Pisoniviricetes</taxon>
        <taxon>Nidovirales</taxon>
        <taxon>Arnidovirineae</taxon>
        <taxon>Arteriviridae</taxon>
        <taxon>Equarterivirinae</taxon>
        <taxon>Alphaarterivirus</taxon>
        <taxon>Alphaarterivirus equid</taxon>
    </lineage>
</organism>
<feature type="chain" id="PRO_0000080871" description="Nucleoprotein">
    <location>
        <begin position="1"/>
        <end position="110"/>
    </location>
</feature>
<feature type="region of interest" description="Disordered" evidence="1">
    <location>
        <begin position="1"/>
        <end position="24"/>
    </location>
</feature>
<feature type="helix" evidence="3">
    <location>
        <begin position="54"/>
        <end position="57"/>
    </location>
</feature>
<feature type="helix" evidence="3">
    <location>
        <begin position="60"/>
        <end position="75"/>
    </location>
</feature>
<feature type="strand" evidence="3">
    <location>
        <begin position="79"/>
        <end position="83"/>
    </location>
</feature>
<feature type="strand" evidence="3">
    <location>
        <begin position="85"/>
        <end position="94"/>
    </location>
</feature>
<feature type="helix" evidence="3">
    <location>
        <begin position="98"/>
        <end position="104"/>
    </location>
</feature>
<accession>P19810</accession>
<keyword id="KW-0002">3D-structure</keyword>
<keyword id="KW-1185">Reference proteome</keyword>
<keyword id="KW-0687">Ribonucleoprotein</keyword>
<keyword id="KW-0694">RNA-binding</keyword>
<keyword id="KW-0543">Viral nucleoprotein</keyword>
<keyword id="KW-0946">Virion</keyword>
<organismHost>
    <name type="scientific">Equidae</name>
    <name type="common">horses</name>
    <dbReference type="NCBI Taxonomy" id="9788"/>
</organismHost>
<dbReference type="EMBL" id="X53459">
    <property type="protein sequence ID" value="CAA37546.1"/>
    <property type="molecule type" value="Genomic_RNA"/>
</dbReference>
<dbReference type="EMBL" id="X52275">
    <property type="protein sequence ID" value="CAA36518.1"/>
    <property type="molecule type" value="Genomic_RNA"/>
</dbReference>
<dbReference type="EMBL" id="X52276">
    <property type="protein sequence ID" value="CAA36519.1"/>
    <property type="molecule type" value="Genomic_RNA"/>
</dbReference>
<dbReference type="PIR" id="H39925">
    <property type="entry name" value="VHWVEA"/>
</dbReference>
<dbReference type="RefSeq" id="NP_065661.1">
    <property type="nucleotide sequence ID" value="NC_002532.2"/>
</dbReference>
<dbReference type="PDB" id="2I9F">
    <property type="method" value="X-ray"/>
    <property type="resolution" value="2.00 A"/>
    <property type="chains" value="A/B/C/D=50-110"/>
</dbReference>
<dbReference type="PDBsum" id="2I9F"/>
<dbReference type="SMR" id="P19810"/>
<dbReference type="KEGG" id="vg:921341"/>
<dbReference type="EvolutionaryTrace" id="P19810"/>
<dbReference type="Proteomes" id="UP000000353">
    <property type="component" value="Segment"/>
</dbReference>
<dbReference type="GO" id="GO:1990904">
    <property type="term" value="C:ribonucleoprotein complex"/>
    <property type="evidence" value="ECO:0007669"/>
    <property type="project" value="UniProtKB-KW"/>
</dbReference>
<dbReference type="GO" id="GO:0019013">
    <property type="term" value="C:viral nucleocapsid"/>
    <property type="evidence" value="ECO:0007669"/>
    <property type="project" value="UniProtKB-KW"/>
</dbReference>
<dbReference type="GO" id="GO:0003723">
    <property type="term" value="F:RNA binding"/>
    <property type="evidence" value="ECO:0007669"/>
    <property type="project" value="UniProtKB-KW"/>
</dbReference>
<dbReference type="Gene3D" id="6.10.140.90">
    <property type="match status" value="1"/>
</dbReference>
<dbReference type="InterPro" id="IPR002484">
    <property type="entry name" value="Arte_nucleocap"/>
</dbReference>
<dbReference type="InterPro" id="IPR037179">
    <property type="entry name" value="Nucleocapsid_C"/>
</dbReference>
<dbReference type="Pfam" id="PF01481">
    <property type="entry name" value="Arteri_nucleo"/>
    <property type="match status" value="1"/>
</dbReference>
<dbReference type="SUPFAM" id="SSF103068">
    <property type="entry name" value="Nucleocapsid protein dimerization domain"/>
    <property type="match status" value="1"/>
</dbReference>
<gene>
    <name type="primary">N</name>
    <name type="synonym">VP1</name>
    <name type="ORF">7</name>
</gene>
<comment type="subcellular location">
    <subcellularLocation>
        <location evidence="2">Virion</location>
    </subcellularLocation>
</comment>
<comment type="similarity">
    <text evidence="2">Belongs to the arteriviridae nucleocapsid family.</text>
</comment>
<protein>
    <recommendedName>
        <fullName>Nucleoprotein</fullName>
    </recommendedName>
    <alternativeName>
        <fullName>Nucleocapsid protein</fullName>
        <shortName>Protein N</shortName>
    </alternativeName>
</protein>
<reference key="1">
    <citation type="journal article" date="1991" name="J. Virol.">
        <title>Equine arteritis virus is not a togavirus but belongs to the coronaviruslike superfamily.</title>
        <authorList>
            <person name="den Boon J.A."/>
            <person name="Snijder E.J."/>
            <person name="Chirnside E.D."/>
            <person name="de Vries A.A.F."/>
            <person name="Horzinek M.C."/>
            <person name="Spaan W.J.M."/>
        </authorList>
    </citation>
    <scope>NUCLEOTIDE SEQUENCE [GENOMIC RNA]</scope>
</reference>
<reference key="2">
    <citation type="journal article" date="1990" name="Nucleic Acids Res.">
        <title>All subgenomic mRNAs of equine arteritis virus contain a common leader sequence.</title>
        <authorList>
            <person name="de Vries A.A.F."/>
            <person name="Chirnside E.D."/>
            <person name="Bredenbeek P.J."/>
            <person name="Gravestein L.A."/>
            <person name="Horzinek M.C."/>
            <person name="Spaan W.J.M."/>
        </authorList>
    </citation>
    <scope>NUCLEOTIDE SEQUENCE [GENOMIC RNA]</scope>
</reference>
<name>NCAP_EAVBU</name>
<evidence type="ECO:0000256" key="1">
    <source>
        <dbReference type="SAM" id="MobiDB-lite"/>
    </source>
</evidence>
<evidence type="ECO:0000305" key="2"/>
<evidence type="ECO:0007829" key="3">
    <source>
        <dbReference type="PDB" id="2I9F"/>
    </source>
</evidence>